<reference key="1">
    <citation type="submission" date="2003-06" db="EMBL/GenBank/DDBJ databases">
        <title>The complete genome sequence of Haemophilus ducreyi.</title>
        <authorList>
            <person name="Munson R.S. Jr."/>
            <person name="Ray W.C."/>
            <person name="Mahairas G."/>
            <person name="Sabo P."/>
            <person name="Mungur R."/>
            <person name="Johnson L."/>
            <person name="Nguyen D."/>
            <person name="Wang J."/>
            <person name="Forst C."/>
            <person name="Hood L."/>
        </authorList>
    </citation>
    <scope>NUCLEOTIDE SEQUENCE [LARGE SCALE GENOMIC DNA]</scope>
    <source>
        <strain>35000HP / ATCC 700724</strain>
    </source>
</reference>
<keyword id="KW-0501">Molybdenum cofactor biosynthesis</keyword>
<keyword id="KW-1185">Reference proteome</keyword>
<keyword id="KW-0808">Transferase</keyword>
<gene>
    <name type="primary">moaE</name>
    <name type="ordered locus">HD_1389</name>
</gene>
<comment type="function">
    <text evidence="1">Converts molybdopterin precursor Z into molybdopterin. This requires the incorporation of two sulfur atoms into precursor Z to generate a dithiolene group. The sulfur is provided by MoaD (By similarity).</text>
</comment>
<comment type="catalytic activity">
    <reaction>
        <text>2 [molybdopterin-synthase sulfur-carrier protein]-C-terminal-Gly-aminoethanethioate + cyclic pyranopterin phosphate + H2O = molybdopterin + 2 [molybdopterin-synthase sulfur-carrier protein]-C-terminal Gly-Gly + 2 H(+)</text>
        <dbReference type="Rhea" id="RHEA:26333"/>
        <dbReference type="Rhea" id="RHEA-COMP:12202"/>
        <dbReference type="Rhea" id="RHEA-COMP:19907"/>
        <dbReference type="ChEBI" id="CHEBI:15377"/>
        <dbReference type="ChEBI" id="CHEBI:15378"/>
        <dbReference type="ChEBI" id="CHEBI:58698"/>
        <dbReference type="ChEBI" id="CHEBI:59648"/>
        <dbReference type="ChEBI" id="CHEBI:90778"/>
        <dbReference type="ChEBI" id="CHEBI:232372"/>
        <dbReference type="EC" id="2.8.1.12"/>
    </reaction>
</comment>
<comment type="pathway">
    <text>Cofactor biosynthesis; molybdopterin biosynthesis.</text>
</comment>
<comment type="subunit">
    <text evidence="1">Heterotetramer of 2 MoaD subunits and 2 MoaE subunits. Also stable as homodimer. The enzyme changes between these two forms during catalysis (By similarity).</text>
</comment>
<comment type="similarity">
    <text evidence="2">Belongs to the MoaE family.</text>
</comment>
<proteinExistence type="inferred from homology"/>
<name>MOAE_HAEDU</name>
<protein>
    <recommendedName>
        <fullName>Molybdopterin synthase catalytic subunit</fullName>
        <ecNumber>2.8.1.12</ecNumber>
    </recommendedName>
    <alternativeName>
        <fullName>MPT synthase subunit 2</fullName>
    </alternativeName>
    <alternativeName>
        <fullName>Molybdenum cofactor biosynthesis protein E</fullName>
    </alternativeName>
    <alternativeName>
        <fullName>Molybdopterin-converting factor large subunit</fullName>
    </alternativeName>
    <alternativeName>
        <fullName>Molybdopterin-converting factor subunit 2</fullName>
    </alternativeName>
</protein>
<feature type="chain" id="PRO_0000163083" description="Molybdopterin synthase catalytic subunit">
    <location>
        <begin position="1"/>
        <end position="151"/>
    </location>
</feature>
<feature type="binding site" evidence="1">
    <location>
        <begin position="37"/>
        <end position="39"/>
    </location>
    <ligand>
        <name>substrate</name>
    </ligand>
</feature>
<feature type="binding site" evidence="1">
    <location>
        <begin position="103"/>
        <end position="104"/>
    </location>
    <ligand>
        <name>substrate</name>
    </ligand>
</feature>
<feature type="binding site" evidence="1">
    <location>
        <position position="119"/>
    </location>
    <ligand>
        <name>substrate</name>
    </ligand>
</feature>
<feature type="binding site" evidence="1">
    <location>
        <begin position="126"/>
        <end position="128"/>
    </location>
    <ligand>
        <name>substrate</name>
    </ligand>
</feature>
<sequence length="151" mass="17536">MQQSVIEVQQAPFDQHAIYQWLSEPHSVGATTIFVGKVREMNLGDNVSGLYLEHYPAMTKKALQEIVNQARQRWELQRIAVIHRIGQLHTGDEIVLVGVSSAHRGDAYLANEFIMDYLKTKAPFWKRETTAEGERWIESRESDEQQLEKWR</sequence>
<accession>Q7VLN4</accession>
<evidence type="ECO:0000250" key="1"/>
<evidence type="ECO:0000305" key="2"/>
<organism>
    <name type="scientific">Haemophilus ducreyi (strain 35000HP / ATCC 700724)</name>
    <dbReference type="NCBI Taxonomy" id="233412"/>
    <lineage>
        <taxon>Bacteria</taxon>
        <taxon>Pseudomonadati</taxon>
        <taxon>Pseudomonadota</taxon>
        <taxon>Gammaproteobacteria</taxon>
        <taxon>Pasteurellales</taxon>
        <taxon>Pasteurellaceae</taxon>
        <taxon>Haemophilus</taxon>
    </lineage>
</organism>
<dbReference type="EC" id="2.8.1.12"/>
<dbReference type="EMBL" id="AE017143">
    <property type="protein sequence ID" value="AAP96201.1"/>
    <property type="molecule type" value="Genomic_DNA"/>
</dbReference>
<dbReference type="RefSeq" id="WP_010945250.1">
    <property type="nucleotide sequence ID" value="NC_002940.2"/>
</dbReference>
<dbReference type="SMR" id="Q7VLN4"/>
<dbReference type="STRING" id="233412.HD_1389"/>
<dbReference type="KEGG" id="hdu:HD_1389"/>
<dbReference type="eggNOG" id="COG0314">
    <property type="taxonomic scope" value="Bacteria"/>
</dbReference>
<dbReference type="HOGENOM" id="CLU_089568_2_1_6"/>
<dbReference type="OrthoDB" id="9803224at2"/>
<dbReference type="UniPathway" id="UPA00344"/>
<dbReference type="Proteomes" id="UP000001022">
    <property type="component" value="Chromosome"/>
</dbReference>
<dbReference type="GO" id="GO:0030366">
    <property type="term" value="F:molybdopterin synthase activity"/>
    <property type="evidence" value="ECO:0007669"/>
    <property type="project" value="UniProtKB-EC"/>
</dbReference>
<dbReference type="GO" id="GO:0006777">
    <property type="term" value="P:Mo-molybdopterin cofactor biosynthetic process"/>
    <property type="evidence" value="ECO:0007669"/>
    <property type="project" value="UniProtKB-KW"/>
</dbReference>
<dbReference type="CDD" id="cd00756">
    <property type="entry name" value="MoaE"/>
    <property type="match status" value="1"/>
</dbReference>
<dbReference type="FunFam" id="3.90.1170.40:FF:000001">
    <property type="entry name" value="Molybdopterin synthase catalytic subunit MoaE"/>
    <property type="match status" value="1"/>
</dbReference>
<dbReference type="Gene3D" id="3.90.1170.40">
    <property type="entry name" value="Molybdopterin biosynthesis MoaE subunit"/>
    <property type="match status" value="1"/>
</dbReference>
<dbReference type="InterPro" id="IPR036563">
    <property type="entry name" value="MoaE_sf"/>
</dbReference>
<dbReference type="InterPro" id="IPR003448">
    <property type="entry name" value="Mopterin_biosynth_MoaE"/>
</dbReference>
<dbReference type="NCBIfam" id="NF007959">
    <property type="entry name" value="PRK10678.1"/>
    <property type="match status" value="1"/>
</dbReference>
<dbReference type="PANTHER" id="PTHR23404">
    <property type="entry name" value="MOLYBDOPTERIN SYNTHASE RELATED"/>
    <property type="match status" value="1"/>
</dbReference>
<dbReference type="Pfam" id="PF02391">
    <property type="entry name" value="MoaE"/>
    <property type="match status" value="1"/>
</dbReference>
<dbReference type="SUPFAM" id="SSF54690">
    <property type="entry name" value="Molybdopterin synthase subunit MoaE"/>
    <property type="match status" value="1"/>
</dbReference>